<evidence type="ECO:0000255" key="1">
    <source>
        <dbReference type="HAMAP-Rule" id="MF_00736"/>
    </source>
</evidence>
<evidence type="ECO:0000305" key="2"/>
<dbReference type="EMBL" id="AE009949">
    <property type="protein sequence ID" value="AAL97221.1"/>
    <property type="molecule type" value="Genomic_DNA"/>
</dbReference>
<dbReference type="RefSeq" id="WP_002990800.1">
    <property type="nucleotide sequence ID" value="NC_003485.1"/>
</dbReference>
<dbReference type="SMR" id="P66059"/>
<dbReference type="GeneID" id="69901302"/>
<dbReference type="KEGG" id="spm:spyM18_0503"/>
<dbReference type="HOGENOM" id="CLU_074237_2_1_9"/>
<dbReference type="GO" id="GO:0022625">
    <property type="term" value="C:cytosolic large ribosomal subunit"/>
    <property type="evidence" value="ECO:0007669"/>
    <property type="project" value="TreeGrafter"/>
</dbReference>
<dbReference type="GO" id="GO:0070180">
    <property type="term" value="F:large ribosomal subunit rRNA binding"/>
    <property type="evidence" value="ECO:0007669"/>
    <property type="project" value="UniProtKB-UniRule"/>
</dbReference>
<dbReference type="GO" id="GO:0003735">
    <property type="term" value="F:structural constituent of ribosome"/>
    <property type="evidence" value="ECO:0007669"/>
    <property type="project" value="InterPro"/>
</dbReference>
<dbReference type="GO" id="GO:0006412">
    <property type="term" value="P:translation"/>
    <property type="evidence" value="ECO:0007669"/>
    <property type="project" value="UniProtKB-UniRule"/>
</dbReference>
<dbReference type="CDD" id="cd00349">
    <property type="entry name" value="Ribosomal_L11"/>
    <property type="match status" value="1"/>
</dbReference>
<dbReference type="FunFam" id="1.10.10.250:FF:000001">
    <property type="entry name" value="50S ribosomal protein L11"/>
    <property type="match status" value="1"/>
</dbReference>
<dbReference type="FunFam" id="3.30.1550.10:FF:000001">
    <property type="entry name" value="50S ribosomal protein L11"/>
    <property type="match status" value="1"/>
</dbReference>
<dbReference type="Gene3D" id="1.10.10.250">
    <property type="entry name" value="Ribosomal protein L11, C-terminal domain"/>
    <property type="match status" value="1"/>
</dbReference>
<dbReference type="Gene3D" id="3.30.1550.10">
    <property type="entry name" value="Ribosomal protein L11/L12, N-terminal domain"/>
    <property type="match status" value="1"/>
</dbReference>
<dbReference type="HAMAP" id="MF_00736">
    <property type="entry name" value="Ribosomal_uL11"/>
    <property type="match status" value="1"/>
</dbReference>
<dbReference type="InterPro" id="IPR000911">
    <property type="entry name" value="Ribosomal_uL11"/>
</dbReference>
<dbReference type="InterPro" id="IPR006519">
    <property type="entry name" value="Ribosomal_uL11_bac-typ"/>
</dbReference>
<dbReference type="InterPro" id="IPR020783">
    <property type="entry name" value="Ribosomal_uL11_C"/>
</dbReference>
<dbReference type="InterPro" id="IPR036769">
    <property type="entry name" value="Ribosomal_uL11_C_sf"/>
</dbReference>
<dbReference type="InterPro" id="IPR020785">
    <property type="entry name" value="Ribosomal_uL11_CS"/>
</dbReference>
<dbReference type="InterPro" id="IPR020784">
    <property type="entry name" value="Ribosomal_uL11_N"/>
</dbReference>
<dbReference type="InterPro" id="IPR036796">
    <property type="entry name" value="Ribosomal_uL11_N_sf"/>
</dbReference>
<dbReference type="NCBIfam" id="TIGR01632">
    <property type="entry name" value="L11_bact"/>
    <property type="match status" value="1"/>
</dbReference>
<dbReference type="PANTHER" id="PTHR11661">
    <property type="entry name" value="60S RIBOSOMAL PROTEIN L12"/>
    <property type="match status" value="1"/>
</dbReference>
<dbReference type="PANTHER" id="PTHR11661:SF1">
    <property type="entry name" value="LARGE RIBOSOMAL SUBUNIT PROTEIN UL11M"/>
    <property type="match status" value="1"/>
</dbReference>
<dbReference type="Pfam" id="PF00298">
    <property type="entry name" value="Ribosomal_L11"/>
    <property type="match status" value="1"/>
</dbReference>
<dbReference type="Pfam" id="PF03946">
    <property type="entry name" value="Ribosomal_L11_N"/>
    <property type="match status" value="1"/>
</dbReference>
<dbReference type="SMART" id="SM00649">
    <property type="entry name" value="RL11"/>
    <property type="match status" value="1"/>
</dbReference>
<dbReference type="SUPFAM" id="SSF54747">
    <property type="entry name" value="Ribosomal L11/L12e N-terminal domain"/>
    <property type="match status" value="1"/>
</dbReference>
<dbReference type="SUPFAM" id="SSF46906">
    <property type="entry name" value="Ribosomal protein L11, C-terminal domain"/>
    <property type="match status" value="1"/>
</dbReference>
<dbReference type="PROSITE" id="PS00359">
    <property type="entry name" value="RIBOSOMAL_L11"/>
    <property type="match status" value="1"/>
</dbReference>
<organism>
    <name type="scientific">Streptococcus pyogenes serotype M18 (strain MGAS8232)</name>
    <dbReference type="NCBI Taxonomy" id="186103"/>
    <lineage>
        <taxon>Bacteria</taxon>
        <taxon>Bacillati</taxon>
        <taxon>Bacillota</taxon>
        <taxon>Bacilli</taxon>
        <taxon>Lactobacillales</taxon>
        <taxon>Streptococcaceae</taxon>
        <taxon>Streptococcus</taxon>
    </lineage>
</organism>
<reference key="1">
    <citation type="journal article" date="2002" name="Proc. Natl. Acad. Sci. U.S.A.">
        <title>Genome sequence and comparative microarray analysis of serotype M18 group A Streptococcus strains associated with acute rheumatic fever outbreaks.</title>
        <authorList>
            <person name="Smoot J.C."/>
            <person name="Barbian K.D."/>
            <person name="Van Gompel J.J."/>
            <person name="Smoot L.M."/>
            <person name="Chaussee M.S."/>
            <person name="Sylva G.L."/>
            <person name="Sturdevant D.E."/>
            <person name="Ricklefs S.M."/>
            <person name="Porcella S.F."/>
            <person name="Parkins L.D."/>
            <person name="Beres S.B."/>
            <person name="Campbell D.S."/>
            <person name="Smith T.M."/>
            <person name="Zhang Q."/>
            <person name="Kapur V."/>
            <person name="Daly J.A."/>
            <person name="Veasy L.G."/>
            <person name="Musser J.M."/>
        </authorList>
    </citation>
    <scope>NUCLEOTIDE SEQUENCE [LARGE SCALE GENOMIC DNA]</scope>
    <source>
        <strain>MGAS8232</strain>
    </source>
</reference>
<gene>
    <name evidence="1" type="primary">rplK</name>
    <name type="synonym">rl11</name>
    <name type="ordered locus">spyM18_0503</name>
</gene>
<sequence length="141" mass="14801">MAKKVEKLVKLQIPAGKATPAPPVGPALGQAGINIMGFTKEFNARTADQAGMIIPVVISVYEDKSFDFITKTPPAAVLLKKAAGVEKGSGTPNTTKVATVTRAQVQEIAETKMPDLNAANIEAAMRMIEGTARSMGFTVTD</sequence>
<protein>
    <recommendedName>
        <fullName evidence="1">Large ribosomal subunit protein uL11</fullName>
    </recommendedName>
    <alternativeName>
        <fullName evidence="2">50S ribosomal protein L11</fullName>
    </alternativeName>
</protein>
<keyword id="KW-0488">Methylation</keyword>
<keyword id="KW-0687">Ribonucleoprotein</keyword>
<keyword id="KW-0689">Ribosomal protein</keyword>
<keyword id="KW-0694">RNA-binding</keyword>
<keyword id="KW-0699">rRNA-binding</keyword>
<comment type="function">
    <text evidence="1">Forms part of the ribosomal stalk which helps the ribosome interact with GTP-bound translation factors.</text>
</comment>
<comment type="subunit">
    <text evidence="1">Part of the ribosomal stalk of the 50S ribosomal subunit. Interacts with L10 and the large rRNA to form the base of the stalk. L10 forms an elongated spine to which L12 dimers bind in a sequential fashion forming a multimeric L10(L12)X complex.</text>
</comment>
<comment type="PTM">
    <text evidence="1">One or more lysine residues are methylated.</text>
</comment>
<comment type="similarity">
    <text evidence="1">Belongs to the universal ribosomal protein uL11 family.</text>
</comment>
<name>RL11_STRP8</name>
<proteinExistence type="inferred from homology"/>
<accession>P66059</accession>
<accession>Q9A153</accession>
<feature type="chain" id="PRO_0000104388" description="Large ribosomal subunit protein uL11">
    <location>
        <begin position="1"/>
        <end position="141"/>
    </location>
</feature>